<feature type="signal peptide" evidence="4">
    <location>
        <begin position="1"/>
        <end position="21"/>
    </location>
</feature>
<feature type="chain" id="PRO_0000011964" description="Chitinase-3-like protein 1">
    <location>
        <begin position="22"/>
        <end position="383"/>
    </location>
</feature>
<feature type="domain" description="GH18" evidence="3">
    <location>
        <begin position="22"/>
        <end position="383"/>
    </location>
</feature>
<feature type="region of interest" description="Important for AKT1 activation and IL8 production" evidence="1">
    <location>
        <begin position="324"/>
        <end position="338"/>
    </location>
</feature>
<feature type="binding site" evidence="3">
    <location>
        <begin position="70"/>
        <end position="71"/>
    </location>
    <ligand>
        <name>chitin</name>
        <dbReference type="ChEBI" id="CHEBI:17029"/>
    </ligand>
</feature>
<feature type="binding site" evidence="3">
    <location>
        <begin position="97"/>
        <end position="100"/>
    </location>
    <ligand>
        <name>chitin</name>
        <dbReference type="ChEBI" id="CHEBI:17029"/>
    </ligand>
</feature>
<feature type="binding site" evidence="3">
    <location>
        <position position="141"/>
    </location>
    <ligand>
        <name>chitin</name>
        <dbReference type="ChEBI" id="CHEBI:17029"/>
    </ligand>
</feature>
<feature type="binding site" evidence="3">
    <location>
        <begin position="204"/>
        <end position="207"/>
    </location>
    <ligand>
        <name>chitin</name>
        <dbReference type="ChEBI" id="CHEBI:17029"/>
    </ligand>
</feature>
<feature type="binding site">
    <location>
        <position position="263"/>
    </location>
    <ligand>
        <name>chitin</name>
        <dbReference type="ChEBI" id="CHEBI:17029"/>
    </ligand>
</feature>
<feature type="binding site" evidence="3">
    <location>
        <position position="352"/>
    </location>
    <ligand>
        <name>chitin</name>
        <dbReference type="ChEBI" id="CHEBI:17029"/>
    </ligand>
</feature>
<feature type="glycosylation site" description="N-linked (GlcNAc...) asparagine" evidence="5">
    <location>
        <position position="60"/>
    </location>
</feature>
<feature type="glycosylation site" description="N-linked (GlcNAc...) asparagine" evidence="2">
    <location>
        <position position="367"/>
    </location>
</feature>
<feature type="disulfide bond" evidence="3 5">
    <location>
        <begin position="26"/>
        <end position="51"/>
    </location>
</feature>
<feature type="disulfide bond" evidence="5">
    <location>
        <begin position="300"/>
        <end position="364"/>
    </location>
</feature>
<feature type="strand" evidence="8">
    <location>
        <begin position="23"/>
        <end position="29"/>
    </location>
</feature>
<feature type="helix" evidence="8">
    <location>
        <begin position="30"/>
        <end position="34"/>
    </location>
</feature>
<feature type="helix" evidence="8">
    <location>
        <begin position="37"/>
        <end position="39"/>
    </location>
</feature>
<feature type="helix" evidence="8">
    <location>
        <begin position="43"/>
        <end position="45"/>
    </location>
</feature>
<feature type="turn" evidence="8">
    <location>
        <begin position="48"/>
        <end position="50"/>
    </location>
</feature>
<feature type="strand" evidence="8">
    <location>
        <begin position="52"/>
        <end position="62"/>
    </location>
</feature>
<feature type="strand" evidence="8">
    <location>
        <begin position="65"/>
        <end position="67"/>
    </location>
</feature>
<feature type="helix" evidence="8">
    <location>
        <begin position="73"/>
        <end position="81"/>
    </location>
</feature>
<feature type="helix" evidence="8">
    <location>
        <begin position="82"/>
        <end position="85"/>
    </location>
</feature>
<feature type="strand" evidence="8">
    <location>
        <begin position="91"/>
        <end position="97"/>
    </location>
</feature>
<feature type="strand" evidence="9">
    <location>
        <begin position="99"/>
        <end position="101"/>
    </location>
</feature>
<feature type="helix" evidence="8">
    <location>
        <begin position="103"/>
        <end position="111"/>
    </location>
</feature>
<feature type="helix" evidence="8">
    <location>
        <begin position="113"/>
        <end position="130"/>
    </location>
</feature>
<feature type="strand" evidence="8">
    <location>
        <begin position="133"/>
        <end position="138"/>
    </location>
</feature>
<feature type="turn" evidence="8">
    <location>
        <begin position="144"/>
        <end position="146"/>
    </location>
</feature>
<feature type="helix" evidence="8">
    <location>
        <begin position="147"/>
        <end position="164"/>
    </location>
</feature>
<feature type="helix" evidence="8">
    <location>
        <begin position="165"/>
        <end position="167"/>
    </location>
</feature>
<feature type="strand" evidence="8">
    <location>
        <begin position="173"/>
        <end position="178"/>
    </location>
</feature>
<feature type="helix" evidence="8">
    <location>
        <begin position="182"/>
        <end position="188"/>
    </location>
</feature>
<feature type="helix" evidence="8">
    <location>
        <begin position="191"/>
        <end position="195"/>
    </location>
</feature>
<feature type="strand" evidence="8">
    <location>
        <begin position="199"/>
        <end position="203"/>
    </location>
</feature>
<feature type="strand" evidence="8">
    <location>
        <begin position="213"/>
        <end position="215"/>
    </location>
</feature>
<feature type="strand" evidence="10">
    <location>
        <begin position="229"/>
        <end position="231"/>
    </location>
</feature>
<feature type="strand" evidence="7">
    <location>
        <begin position="234"/>
        <end position="236"/>
    </location>
</feature>
<feature type="helix" evidence="8">
    <location>
        <begin position="237"/>
        <end position="247"/>
    </location>
</feature>
<feature type="helix" evidence="8">
    <location>
        <begin position="251"/>
        <end position="253"/>
    </location>
</feature>
<feature type="strand" evidence="8">
    <location>
        <begin position="254"/>
        <end position="270"/>
    </location>
</feature>
<feature type="strand" evidence="8">
    <location>
        <begin position="277"/>
        <end position="281"/>
    </location>
</feature>
<feature type="turn" evidence="8">
    <location>
        <begin position="286"/>
        <end position="288"/>
    </location>
</feature>
<feature type="strand" evidence="8">
    <location>
        <begin position="293"/>
        <end position="295"/>
    </location>
</feature>
<feature type="helix" evidence="8">
    <location>
        <begin position="296"/>
        <end position="302"/>
    </location>
</feature>
<feature type="turn" evidence="8">
    <location>
        <begin position="303"/>
        <end position="305"/>
    </location>
</feature>
<feature type="strand" evidence="8">
    <location>
        <begin position="307"/>
        <end position="311"/>
    </location>
</feature>
<feature type="turn" evidence="8">
    <location>
        <begin position="312"/>
        <end position="315"/>
    </location>
</feature>
<feature type="strand" evidence="8">
    <location>
        <begin position="316"/>
        <end position="321"/>
    </location>
</feature>
<feature type="strand" evidence="8">
    <location>
        <begin position="324"/>
        <end position="327"/>
    </location>
</feature>
<feature type="helix" evidence="8">
    <location>
        <begin position="331"/>
        <end position="343"/>
    </location>
</feature>
<feature type="strand" evidence="8">
    <location>
        <begin position="347"/>
        <end position="352"/>
    </location>
</feature>
<feature type="helix" evidence="8">
    <location>
        <begin position="354"/>
        <end position="356"/>
    </location>
</feature>
<feature type="strand" evidence="8">
    <location>
        <begin position="359"/>
        <end position="361"/>
    </location>
</feature>
<feature type="strand" evidence="8">
    <location>
        <begin position="363"/>
        <end position="367"/>
    </location>
</feature>
<feature type="helix" evidence="8">
    <location>
        <begin position="371"/>
        <end position="381"/>
    </location>
</feature>
<dbReference type="EMBL" id="AY081150">
    <property type="protein sequence ID" value="AAL87007.1"/>
    <property type="molecule type" value="mRNA"/>
</dbReference>
<dbReference type="RefSeq" id="NP_001272618.1">
    <property type="nucleotide sequence ID" value="NM_001285689.1"/>
</dbReference>
<dbReference type="PDB" id="1LJY">
    <property type="method" value="X-ray"/>
    <property type="resolution" value="2.90 A"/>
    <property type="chains" value="A=22-383"/>
</dbReference>
<dbReference type="PDB" id="1SYT">
    <property type="method" value="X-ray"/>
    <property type="resolution" value="2.60 A"/>
    <property type="chains" value="A=22-381"/>
</dbReference>
<dbReference type="PDB" id="1ZBV">
    <property type="method" value="X-ray"/>
    <property type="resolution" value="3.21 A"/>
    <property type="chains" value="A=22-381"/>
</dbReference>
<dbReference type="PDB" id="1ZBW">
    <property type="method" value="X-ray"/>
    <property type="resolution" value="2.80 A"/>
    <property type="chains" value="A=22-381"/>
</dbReference>
<dbReference type="PDB" id="1ZU8">
    <property type="method" value="X-ray"/>
    <property type="resolution" value="3.05 A"/>
    <property type="chains" value="A=22-383"/>
</dbReference>
<dbReference type="PDB" id="2AOS">
    <property type="method" value="X-ray"/>
    <property type="resolution" value="2.90 A"/>
    <property type="chains" value="A=22-381"/>
</dbReference>
<dbReference type="PDB" id="2B31">
    <property type="method" value="X-ray"/>
    <property type="resolution" value="3.10 A"/>
    <property type="chains" value="A=22-381"/>
</dbReference>
<dbReference type="PDB" id="2DSZ">
    <property type="method" value="X-ray"/>
    <property type="resolution" value="2.35 A"/>
    <property type="chains" value="A=22-381"/>
</dbReference>
<dbReference type="PDB" id="2DT0">
    <property type="method" value="X-ray"/>
    <property type="resolution" value="2.45 A"/>
    <property type="chains" value="A=22-381"/>
</dbReference>
<dbReference type="PDB" id="2DT1">
    <property type="method" value="X-ray"/>
    <property type="resolution" value="2.09 A"/>
    <property type="chains" value="A=22-381"/>
</dbReference>
<dbReference type="PDB" id="2DT2">
    <property type="method" value="X-ray"/>
    <property type="resolution" value="2.90 A"/>
    <property type="chains" value="A=22-381"/>
</dbReference>
<dbReference type="PDB" id="2DT3">
    <property type="method" value="X-ray"/>
    <property type="resolution" value="2.28 A"/>
    <property type="chains" value="A=22-381"/>
</dbReference>
<dbReference type="PDB" id="2O92">
    <property type="method" value="X-ray"/>
    <property type="resolution" value="3.00 A"/>
    <property type="chains" value="A=22-381"/>
</dbReference>
<dbReference type="PDB" id="2OLH">
    <property type="method" value="X-ray"/>
    <property type="resolution" value="2.78 A"/>
    <property type="chains" value="A=22-381"/>
</dbReference>
<dbReference type="PDBsum" id="1LJY"/>
<dbReference type="PDBsum" id="1SYT"/>
<dbReference type="PDBsum" id="1ZBV"/>
<dbReference type="PDBsum" id="1ZBW"/>
<dbReference type="PDBsum" id="1ZU8"/>
<dbReference type="PDBsum" id="2AOS"/>
<dbReference type="PDBsum" id="2B31"/>
<dbReference type="PDBsum" id="2DSZ"/>
<dbReference type="PDBsum" id="2DT0"/>
<dbReference type="PDBsum" id="2DT1"/>
<dbReference type="PDBsum" id="2DT2"/>
<dbReference type="PDBsum" id="2DT3"/>
<dbReference type="PDBsum" id="2O92"/>
<dbReference type="PDBsum" id="2OLH"/>
<dbReference type="SMR" id="Q8SPQ0"/>
<dbReference type="STRING" id="9925.ENSCHIP00000001773"/>
<dbReference type="CAZy" id="GH18">
    <property type="family name" value="Glycoside Hydrolase Family 18"/>
</dbReference>
<dbReference type="GlyCosmos" id="Q8SPQ0">
    <property type="glycosylation" value="2 sites, No reported glycans"/>
</dbReference>
<dbReference type="iPTMnet" id="Q8SPQ0"/>
<dbReference type="GeneID" id="100860825"/>
<dbReference type="KEGG" id="chx:100860825"/>
<dbReference type="CTD" id="1116"/>
<dbReference type="OrthoDB" id="76388at2759"/>
<dbReference type="EvolutionaryTrace" id="Q8SPQ0"/>
<dbReference type="Proteomes" id="UP000291000">
    <property type="component" value="Unassembled WGS sequence"/>
</dbReference>
<dbReference type="Proteomes" id="UP000694566">
    <property type="component" value="Unplaced"/>
</dbReference>
<dbReference type="GO" id="GO:0005737">
    <property type="term" value="C:cytoplasm"/>
    <property type="evidence" value="ECO:0000250"/>
    <property type="project" value="UniProtKB"/>
</dbReference>
<dbReference type="GO" id="GO:0005783">
    <property type="term" value="C:endoplasmic reticulum"/>
    <property type="evidence" value="ECO:0000250"/>
    <property type="project" value="UniProtKB"/>
</dbReference>
<dbReference type="GO" id="GO:0005615">
    <property type="term" value="C:extracellular space"/>
    <property type="evidence" value="ECO:0000250"/>
    <property type="project" value="UniProtKB"/>
</dbReference>
<dbReference type="GO" id="GO:0048471">
    <property type="term" value="C:perinuclear region of cytoplasm"/>
    <property type="evidence" value="ECO:0007669"/>
    <property type="project" value="UniProtKB-SubCell"/>
</dbReference>
<dbReference type="GO" id="GO:0030246">
    <property type="term" value="F:carbohydrate binding"/>
    <property type="evidence" value="ECO:0007669"/>
    <property type="project" value="UniProtKB-KW"/>
</dbReference>
<dbReference type="GO" id="GO:0008061">
    <property type="term" value="F:chitin binding"/>
    <property type="evidence" value="ECO:0000250"/>
    <property type="project" value="UniProtKB"/>
</dbReference>
<dbReference type="GO" id="GO:0007250">
    <property type="term" value="P:activation of NF-kappaB-inducing kinase activity"/>
    <property type="evidence" value="ECO:0000250"/>
    <property type="project" value="UniProtKB"/>
</dbReference>
<dbReference type="GO" id="GO:0006915">
    <property type="term" value="P:apoptotic process"/>
    <property type="evidence" value="ECO:0007669"/>
    <property type="project" value="UniProtKB-KW"/>
</dbReference>
<dbReference type="GO" id="GO:0005975">
    <property type="term" value="P:carbohydrate metabolic process"/>
    <property type="evidence" value="ECO:0007669"/>
    <property type="project" value="InterPro"/>
</dbReference>
<dbReference type="GO" id="GO:0071356">
    <property type="term" value="P:cellular response to tumor necrosis factor"/>
    <property type="evidence" value="ECO:0000250"/>
    <property type="project" value="UniProtKB"/>
</dbReference>
<dbReference type="GO" id="GO:0006032">
    <property type="term" value="P:chitin catabolic process"/>
    <property type="evidence" value="ECO:0007669"/>
    <property type="project" value="TreeGrafter"/>
</dbReference>
<dbReference type="GO" id="GO:0006954">
    <property type="term" value="P:inflammatory response"/>
    <property type="evidence" value="ECO:0000250"/>
    <property type="project" value="UniProtKB"/>
</dbReference>
<dbReference type="GO" id="GO:0030324">
    <property type="term" value="P:lung development"/>
    <property type="evidence" value="ECO:0000250"/>
    <property type="project" value="UniProtKB"/>
</dbReference>
<dbReference type="GO" id="GO:0045766">
    <property type="term" value="P:positive regulation of angiogenesis"/>
    <property type="evidence" value="ECO:0000250"/>
    <property type="project" value="UniProtKB"/>
</dbReference>
<dbReference type="GO" id="GO:0070374">
    <property type="term" value="P:positive regulation of ERK1 and ERK2 cascade"/>
    <property type="evidence" value="ECO:0000250"/>
    <property type="project" value="UniProtKB"/>
</dbReference>
<dbReference type="GO" id="GO:0032757">
    <property type="term" value="P:positive regulation of interleukin-8 production"/>
    <property type="evidence" value="ECO:0000250"/>
    <property type="project" value="UniProtKB"/>
</dbReference>
<dbReference type="GO" id="GO:0010800">
    <property type="term" value="P:positive regulation of peptidyl-threonine phosphorylation"/>
    <property type="evidence" value="ECO:0000250"/>
    <property type="project" value="UniProtKB"/>
</dbReference>
<dbReference type="GO" id="GO:0051897">
    <property type="term" value="P:positive regulation of phosphatidylinositol 3-kinase/protein kinase B signal transduction"/>
    <property type="evidence" value="ECO:0000250"/>
    <property type="project" value="UniProtKB"/>
</dbReference>
<dbReference type="GO" id="GO:0070555">
    <property type="term" value="P:response to interleukin-1"/>
    <property type="evidence" value="ECO:0000250"/>
    <property type="project" value="UniProtKB"/>
</dbReference>
<dbReference type="GO" id="GO:0070741">
    <property type="term" value="P:response to interleukin-6"/>
    <property type="evidence" value="ECO:0000250"/>
    <property type="project" value="UniProtKB"/>
</dbReference>
<dbReference type="GO" id="GO:0009612">
    <property type="term" value="P:response to mechanical stimulus"/>
    <property type="evidence" value="ECO:0000250"/>
    <property type="project" value="UniProtKB"/>
</dbReference>
<dbReference type="GO" id="GO:0034612">
    <property type="term" value="P:response to tumor necrosis factor"/>
    <property type="evidence" value="ECO:0000250"/>
    <property type="project" value="UniProtKB"/>
</dbReference>
<dbReference type="CDD" id="cd02872">
    <property type="entry name" value="GH18_chitolectin_chitotriosidase"/>
    <property type="match status" value="1"/>
</dbReference>
<dbReference type="FunFam" id="3.10.50.10:FF:000001">
    <property type="entry name" value="Chitinase 3-like 1"/>
    <property type="match status" value="1"/>
</dbReference>
<dbReference type="FunFam" id="3.20.20.80:FF:000047">
    <property type="entry name" value="Chitinase-3-like protein 1"/>
    <property type="match status" value="1"/>
</dbReference>
<dbReference type="Gene3D" id="3.10.50.10">
    <property type="match status" value="1"/>
</dbReference>
<dbReference type="Gene3D" id="3.20.20.80">
    <property type="entry name" value="Glycosidases"/>
    <property type="match status" value="1"/>
</dbReference>
<dbReference type="InterPro" id="IPR011583">
    <property type="entry name" value="Chitinase_II/V-like_cat"/>
</dbReference>
<dbReference type="InterPro" id="IPR029070">
    <property type="entry name" value="Chitinase_insertion_sf"/>
</dbReference>
<dbReference type="InterPro" id="IPR001223">
    <property type="entry name" value="Glyco_hydro18_cat"/>
</dbReference>
<dbReference type="InterPro" id="IPR017853">
    <property type="entry name" value="Glycoside_hydrolase_SF"/>
</dbReference>
<dbReference type="InterPro" id="IPR050314">
    <property type="entry name" value="Glycosyl_Hydrlase_18"/>
</dbReference>
<dbReference type="PANTHER" id="PTHR11177">
    <property type="entry name" value="CHITINASE"/>
    <property type="match status" value="1"/>
</dbReference>
<dbReference type="PANTHER" id="PTHR11177:SF202">
    <property type="entry name" value="CHITINASE-3-LIKE PROTEIN 1"/>
    <property type="match status" value="1"/>
</dbReference>
<dbReference type="Pfam" id="PF00704">
    <property type="entry name" value="Glyco_hydro_18"/>
    <property type="match status" value="1"/>
</dbReference>
<dbReference type="SMART" id="SM00636">
    <property type="entry name" value="Glyco_18"/>
    <property type="match status" value="1"/>
</dbReference>
<dbReference type="SUPFAM" id="SSF51445">
    <property type="entry name" value="(Trans)glycosidases"/>
    <property type="match status" value="1"/>
</dbReference>
<dbReference type="SUPFAM" id="SSF54556">
    <property type="entry name" value="Chitinase insertion domain"/>
    <property type="match status" value="1"/>
</dbReference>
<dbReference type="PROSITE" id="PS51910">
    <property type="entry name" value="GH18_2"/>
    <property type="match status" value="1"/>
</dbReference>
<accession>Q8SPQ0</accession>
<proteinExistence type="evidence at protein level"/>
<reference key="1">
    <citation type="journal article" date="2003" name="J. Biol. Chem.">
        <title>Crystal structure of a novel regulatory 40-kDa mammary gland protein (MGP-40) secreted during involution.</title>
        <authorList>
            <person name="Mohanty A.K."/>
            <person name="Singh G."/>
            <person name="Paramasivam M."/>
            <person name="Saravanan K."/>
            <person name="Jabeen T."/>
            <person name="Sharma S."/>
            <person name="Yadav S."/>
            <person name="Kaur P."/>
            <person name="Kumar P."/>
            <person name="Srinivasan A."/>
            <person name="Singh T.P."/>
        </authorList>
    </citation>
    <scope>NUCLEOTIDE SEQUENCE [MRNA]</scope>
    <scope>PROTEIN SEQUENCE OF N-TERMINUS</scope>
    <scope>X-RAY CRYSTALLOGRAPHY (2.9 ANGSTROMS) OF 22-383 IN COMPLEX WITH CHITIN OLIGOMERS</scope>
    <source>
        <tissue>Mammary gland</tissue>
    </source>
</reference>
<reference key="2">
    <citation type="journal article" date="2007" name="Acta Crystallogr. D">
        <title>Carbohydrate-binding properties of goat secretory glycoprotein (SPG-40) and its functional implications: structures of the native glycoprotein and its four complexes with chitin-like oligosaccharides.</title>
        <authorList>
            <person name="Kumar J."/>
            <person name="Ethayathulla A.S."/>
            <person name="Srivastava D.B."/>
            <person name="Singh N."/>
            <person name="Sharma S."/>
            <person name="Kaur P."/>
            <person name="Srinivasan A."/>
            <person name="Singh T.P."/>
        </authorList>
    </citation>
    <scope>X-RAY CRYSTALLOGRAPHY (2.09 ANGSTROMS) OF 22-381 IN COMPLEXES WITH OLIGOSACCHARIDES</scope>
    <scope>GLYCOSYLATION AT ASN-60</scope>
    <scope>DISULFIDE BONDS</scope>
</reference>
<gene>
    <name type="primary">CHI3L1</name>
</gene>
<evidence type="ECO:0000250" key="1"/>
<evidence type="ECO:0000255" key="2"/>
<evidence type="ECO:0000255" key="3">
    <source>
        <dbReference type="PROSITE-ProRule" id="PRU01258"/>
    </source>
</evidence>
<evidence type="ECO:0000269" key="4">
    <source>
    </source>
</evidence>
<evidence type="ECO:0000269" key="5">
    <source>
    </source>
</evidence>
<evidence type="ECO:0000305" key="6"/>
<evidence type="ECO:0007829" key="7">
    <source>
        <dbReference type="PDB" id="1LJY"/>
    </source>
</evidence>
<evidence type="ECO:0007829" key="8">
    <source>
        <dbReference type="PDB" id="2DT1"/>
    </source>
</evidence>
<evidence type="ECO:0007829" key="9">
    <source>
        <dbReference type="PDB" id="2DT3"/>
    </source>
</evidence>
<evidence type="ECO:0007829" key="10">
    <source>
        <dbReference type="PDB" id="2OLH"/>
    </source>
</evidence>
<sequence length="383" mass="42894">MGLRASGTGFVVLVLLQSCAAYKLICYYTSWSQYREGDGSCFPDAIDPFLCTHIIYSFANISNNEIDTWEWNDVTLYDTLNTLKNRNPKLKTLLSVGGWNFGPERFSKIASKTQSRRTFIKSVPPFLRTHGFDGLDLAWLYPGRRDKRHLTGLVKEMKAEFAREAQAGTERLLLSAAVSAGKIAIDRGYDIAQISRHLDFISLLTYDFHGAWRQTVGHHSPLFRGQEDASSDRFSNADYAVSYMLRLGAPANKLVMGIPTFGRSFTLASSKTDVGAPISGPGIPGRFTKEKGILAYYEICDFLHGATTHRFRDQQVPYATKGNQWVAYDDQESVKNKARYLKNRQLAGAMVWALDLDDFRGTFCGQNLTFPLTSAVKDVLAEV</sequence>
<name>CH3L1_CAPHI</name>
<keyword id="KW-0002">3D-structure</keyword>
<keyword id="KW-0929">Antimicrobial</keyword>
<keyword id="KW-0053">Apoptosis</keyword>
<keyword id="KW-0963">Cytoplasm</keyword>
<keyword id="KW-0903">Direct protein sequencing</keyword>
<keyword id="KW-1015">Disulfide bond</keyword>
<keyword id="KW-0256">Endoplasmic reticulum</keyword>
<keyword id="KW-0325">Glycoprotein</keyword>
<keyword id="KW-0395">Inflammatory response</keyword>
<keyword id="KW-0430">Lectin</keyword>
<keyword id="KW-1185">Reference proteome</keyword>
<keyword id="KW-0964">Secreted</keyword>
<keyword id="KW-0732">Signal</keyword>
<protein>
    <recommendedName>
        <fullName>Chitinase-3-like protein 1</fullName>
    </recommendedName>
    <alternativeName>
        <fullName>BP40</fullName>
    </alternativeName>
    <alternativeName>
        <fullName>Mammary gland protein 40</fullName>
        <shortName>MGP-40</shortName>
    </alternativeName>
</protein>
<organism>
    <name type="scientific">Capra hircus</name>
    <name type="common">Goat</name>
    <dbReference type="NCBI Taxonomy" id="9925"/>
    <lineage>
        <taxon>Eukaryota</taxon>
        <taxon>Metazoa</taxon>
        <taxon>Chordata</taxon>
        <taxon>Craniata</taxon>
        <taxon>Vertebrata</taxon>
        <taxon>Euteleostomi</taxon>
        <taxon>Mammalia</taxon>
        <taxon>Eutheria</taxon>
        <taxon>Laurasiatheria</taxon>
        <taxon>Artiodactyla</taxon>
        <taxon>Ruminantia</taxon>
        <taxon>Pecora</taxon>
        <taxon>Bovidae</taxon>
        <taxon>Caprinae</taxon>
        <taxon>Capra</taxon>
    </lineage>
</organism>
<comment type="function">
    <text evidence="1">Carbohydrate-binding lectin with a preference for chitin. Has no chitinase activity. May play a role in tissue remodeling and in the capacity of cells to respond to and cope with changes in their environment. Plays a role in T-helper cell type 2 (Th2) inflammatory response and IL-13-induced inflammation, regulating allergen sensitization, inflammatory cell apoptosis, dendritic cell accumulation and M2 macrophage differentiation. Facilitates invasion of pathogenic enteric bacteria into colonic mucosa and lymphoid organs. Mediates activation of AKT1 signaling pathway and subsequent IL8 production in colonic epithelial cells. Regulates antibacterial responses in lung by contributing to macrophage bacterial killing, controlling bacterial dissemination and augmenting host tolerance. Also regulates hyperoxia-induced injury, inflammation and epithelial apoptosis in lung (By similarity).</text>
</comment>
<comment type="subunit">
    <text evidence="4">Monomer.</text>
</comment>
<comment type="subcellular location">
    <subcellularLocation>
        <location>Secreted</location>
        <location>Extracellular space</location>
    </subcellularLocation>
    <subcellularLocation>
        <location evidence="1">Cytoplasm</location>
    </subcellularLocation>
    <subcellularLocation>
        <location evidence="1">Cytoplasm</location>
        <location evidence="1">Perinuclear region</location>
    </subcellularLocation>
    <subcellularLocation>
        <location evidence="1">Endoplasmic reticulum</location>
    </subcellularLocation>
</comment>
<comment type="similarity">
    <text evidence="6">Belongs to the glycosyl hydrolase 18 family.</text>
</comment>
<comment type="caution">
    <text evidence="6">Although it belongs to the glycosyl hydrolase 18 family, Leu-140 is present instead of the conserved Glu which is an active site residue. Therefore this protein lacks chitinase activity.</text>
</comment>